<protein>
    <recommendedName>
        <fullName evidence="3 6">Aldehyde dehydrogenase tropH</fullName>
        <ecNumber evidence="3">1.2.1.3</ecNumber>
    </recommendedName>
    <alternativeName>
        <fullName evidence="7">Tropolone synthesis protein H</fullName>
    </alternativeName>
</protein>
<dbReference type="EC" id="1.2.1.3" evidence="3"/>
<dbReference type="EMBL" id="BK008910">
    <property type="protein sequence ID" value="DAA64705.1"/>
    <property type="molecule type" value="Genomic_DNA"/>
</dbReference>
<dbReference type="EMBL" id="EQ962655">
    <property type="protein sequence ID" value="EED18006.1"/>
    <property type="molecule type" value="Genomic_DNA"/>
</dbReference>
<dbReference type="RefSeq" id="XP_002481998.1">
    <property type="nucleotide sequence ID" value="XM_002481953.1"/>
</dbReference>
<dbReference type="SMR" id="B8M9K4"/>
<dbReference type="STRING" id="441959.B8M9K4"/>
<dbReference type="GeneID" id="8105837"/>
<dbReference type="VEuPathDB" id="FungiDB:TSTA_117790"/>
<dbReference type="eggNOG" id="KOG2450">
    <property type="taxonomic scope" value="Eukaryota"/>
</dbReference>
<dbReference type="HOGENOM" id="CLU_005391_0_0_1"/>
<dbReference type="InParanoid" id="B8M9K4"/>
<dbReference type="OMA" id="MAMNAPF"/>
<dbReference type="OrthoDB" id="310895at2759"/>
<dbReference type="PhylomeDB" id="B8M9K4"/>
<dbReference type="Proteomes" id="UP000001745">
    <property type="component" value="Unassembled WGS sequence"/>
</dbReference>
<dbReference type="GO" id="GO:0004029">
    <property type="term" value="F:aldehyde dehydrogenase (NAD+) activity"/>
    <property type="evidence" value="ECO:0007669"/>
    <property type="project" value="UniProtKB-EC"/>
</dbReference>
<dbReference type="FunFam" id="3.40.309.10:FF:000012">
    <property type="entry name" value="Betaine aldehyde dehydrogenase"/>
    <property type="match status" value="1"/>
</dbReference>
<dbReference type="FunFam" id="3.40.605.10:FF:000007">
    <property type="entry name" value="NAD/NADP-dependent betaine aldehyde dehydrogenase"/>
    <property type="match status" value="1"/>
</dbReference>
<dbReference type="Gene3D" id="3.40.605.10">
    <property type="entry name" value="Aldehyde Dehydrogenase, Chain A, domain 1"/>
    <property type="match status" value="1"/>
</dbReference>
<dbReference type="Gene3D" id="3.40.309.10">
    <property type="entry name" value="Aldehyde Dehydrogenase, Chain A, domain 2"/>
    <property type="match status" value="1"/>
</dbReference>
<dbReference type="InterPro" id="IPR016161">
    <property type="entry name" value="Ald_DH/histidinol_DH"/>
</dbReference>
<dbReference type="InterPro" id="IPR016163">
    <property type="entry name" value="Ald_DH_C"/>
</dbReference>
<dbReference type="InterPro" id="IPR029510">
    <property type="entry name" value="Ald_DH_CS_GLU"/>
</dbReference>
<dbReference type="InterPro" id="IPR016162">
    <property type="entry name" value="Ald_DH_N"/>
</dbReference>
<dbReference type="InterPro" id="IPR015590">
    <property type="entry name" value="Aldehyde_DH_dom"/>
</dbReference>
<dbReference type="PANTHER" id="PTHR11699">
    <property type="entry name" value="ALDEHYDE DEHYDROGENASE-RELATED"/>
    <property type="match status" value="1"/>
</dbReference>
<dbReference type="Pfam" id="PF00171">
    <property type="entry name" value="Aldedh"/>
    <property type="match status" value="1"/>
</dbReference>
<dbReference type="SUPFAM" id="SSF53720">
    <property type="entry name" value="ALDH-like"/>
    <property type="match status" value="1"/>
</dbReference>
<dbReference type="PROSITE" id="PS00687">
    <property type="entry name" value="ALDEHYDE_DEHYDR_GLU"/>
    <property type="match status" value="1"/>
</dbReference>
<sequence length="515" mass="55559">MAPNFPPIEEALPLHHDLFYDGKWQTPITDSRRETLNPSTGQVIGKIADASTTDVDKAVEAAHKAFLSWKKTTMAERQGYMRRAAAILREHAAELALVESYNTGNPVAAMVIDAERAANALDYFAGLIPMLRGEVLPGPFPTEDYLHYTVREPMGVVARFVASNHPFMFAGARMASVIAGGNTVIIKPPEQAPLSCLRLAELLENVFPPGVVNILPGGAECGQALTCHPLVRKVSLIGSVATGKIIMRNAGSLMKQTSMELGGKNALIAFPDADIDHLVRSVAAGMNFTWAGQSCGSTSRVFLHDSIHDEVLARVVEVVRKGFRPGLATDPTTTMGSLISKAAQDRVLNYIASAREEGARLVTGGGMFDDLAGTPVEGGFFVQPTIFADVTPDMKIAREEIFGPVMSVLRWSDESELIRIVNSTNYGLTGSIFTKDLATAQRMIRQVEAGFVWVNDVCKHFLNVPYGGIKDSGIGRDECIDELFAYTNIKSVNINLGGATHLGSRLSQAGQISNT</sequence>
<keyword id="KW-0520">NAD</keyword>
<keyword id="KW-0560">Oxidoreductase</keyword>
<keyword id="KW-1185">Reference proteome</keyword>
<feature type="chain" id="PRO_0000437134" description="Aldehyde dehydrogenase tropH">
    <location>
        <begin position="1"/>
        <end position="515"/>
    </location>
</feature>
<feature type="active site" description="Proton acceptor" evidence="1 3">
    <location>
        <position position="260"/>
    </location>
</feature>
<feature type="active site" description="Nucleophile" evidence="1 3">
    <location>
        <position position="295"/>
    </location>
</feature>
<feature type="binding site" evidence="1">
    <location>
        <begin position="238"/>
        <end position="243"/>
    </location>
    <ligand>
        <name>NAD(+)</name>
        <dbReference type="ChEBI" id="CHEBI:57540"/>
    </ligand>
</feature>
<name>TROPH_TALSN</name>
<comment type="function">
    <text evidence="4 5">Aldehyde dehydrogenase; part of the gene cluster that mediates the biosynthesis of the tropolone class of fungal maleic anhydrides (PubMed:22508998, PubMed:24863423). The pathway begins with the synthesis of 3-methylorcinaldehyde by the non-reducing polyketide synthase (PKS) tropA (PubMed:22508998). 3-methylorcinaldehyde is the substrate for the FAD-dependent monooxygenase tropB to yield a dearomatized hydroxycyclohexadione (PubMed:22508998, PubMed:24863423). The 2-oxoglutarate-dependent dioxygenase tropC then performs the oxidative ring expansion to provide the first tropolone metabolite stipitaldehyde (PubMed:22508998, PubMed:24863423). Trop D converts stipitaldehyde into stipitacetal which is in turn converted to stipitalide by the short-chain dehydrogenase/reductase tropE (PubMed:24863423). The next steps involve tropF, tropG, tropH, tropI and tropJ to form successive tropolone maleic anhydrides including stipitaldehydic, stipitatonic and stipitatic acids (PubMed:24863423).</text>
</comment>
<comment type="catalytic activity">
    <reaction evidence="3">
        <text>an aldehyde + NAD(+) + H2O = a carboxylate + NADH + 2 H(+)</text>
        <dbReference type="Rhea" id="RHEA:16185"/>
        <dbReference type="ChEBI" id="CHEBI:15377"/>
        <dbReference type="ChEBI" id="CHEBI:15378"/>
        <dbReference type="ChEBI" id="CHEBI:17478"/>
        <dbReference type="ChEBI" id="CHEBI:29067"/>
        <dbReference type="ChEBI" id="CHEBI:57540"/>
        <dbReference type="ChEBI" id="CHEBI:57945"/>
        <dbReference type="EC" id="1.2.1.3"/>
    </reaction>
</comment>
<comment type="pathway">
    <text evidence="5">Secondary metabolite biosynthesis.</text>
</comment>
<comment type="disruption phenotype">
    <text evidence="5">Leads to the accumulation of stipitaldehydic acid (PubMed:24863423).</text>
</comment>
<comment type="similarity">
    <text evidence="2">Belongs to the aldehyde dehydrogenase family.</text>
</comment>
<reference key="1">
    <citation type="journal article" date="2012" name="Proc. Natl. Acad. Sci. U.S.A.">
        <title>Genetic, molecular, and biochemical basis of fungal tropolone biosynthesis.</title>
        <authorList>
            <person name="Davison J."/>
            <person name="al Fahad A."/>
            <person name="Cai M."/>
            <person name="Song Z."/>
            <person name="Yehia S.Y."/>
            <person name="Lazarus C.M."/>
            <person name="Bailey A.M."/>
            <person name="Simpson T.J."/>
            <person name="Cox R.J."/>
        </authorList>
    </citation>
    <scope>NUCLEOTIDE SEQUENCE [GENOMIC DNA]</scope>
    <scope>FUNCTION</scope>
    <source>
        <strain>ATCC 10500 / CBS 375.48 / QM 6759 / NRRL 1006</strain>
    </source>
</reference>
<reference key="2">
    <citation type="journal article" date="2014" name="Angew. Chem. Int. Ed.">
        <title>The biosynthesis and catabolism of the maleic anhydride moiety of stipitatonic acid.</title>
        <authorList>
            <person name="al Fahad A."/>
            <person name="Abood A."/>
            <person name="Simpson T.J."/>
            <person name="Cox R.J."/>
        </authorList>
    </citation>
    <scope>NUCLEOTIDE SEQUENCE [GENOMIC DNA]</scope>
    <scope>FUNCTION</scope>
    <scope>DISRUPTION PHENOTYPE</scope>
    <source>
        <strain>ATCC 10500 / CBS 375.48 / QM 6759 / NRRL 1006</strain>
    </source>
</reference>
<reference key="3">
    <citation type="journal article" date="2015" name="Genome Announc.">
        <title>Genome sequence of the AIDS-associated pathogen Penicillium marneffei (ATCC18224) and its near taxonomic relative Talaromyces stipitatus (ATCC10500).</title>
        <authorList>
            <person name="Nierman W.C."/>
            <person name="Fedorova-Abrams N.D."/>
            <person name="Andrianopoulos A."/>
        </authorList>
    </citation>
    <scope>NUCLEOTIDE SEQUENCE [LARGE SCALE GENOMIC DNA]</scope>
    <source>
        <strain>ATCC 10500 / CBS 375.48 / QM 6759 / NRRL 1006</strain>
    </source>
</reference>
<proteinExistence type="inferred from homology"/>
<gene>
    <name evidence="7" type="primary">tropH</name>
    <name evidence="6" type="synonym">tsR4</name>
    <name type="ORF">TSTA_117790</name>
</gene>
<evidence type="ECO:0000250" key="1">
    <source>
        <dbReference type="UniProtKB" id="Q28399"/>
    </source>
</evidence>
<evidence type="ECO:0000255" key="2"/>
<evidence type="ECO:0000255" key="3">
    <source>
        <dbReference type="PROSITE-ProRule" id="PRU10007"/>
    </source>
</evidence>
<evidence type="ECO:0000269" key="4">
    <source>
    </source>
</evidence>
<evidence type="ECO:0000269" key="5">
    <source>
    </source>
</evidence>
<evidence type="ECO:0000303" key="6">
    <source>
    </source>
</evidence>
<evidence type="ECO:0000303" key="7">
    <source>
    </source>
</evidence>
<accession>B8M9K4</accession>
<organism>
    <name type="scientific">Talaromyces stipitatus (strain ATCC 10500 / CBS 375.48 / QM 6759 / NRRL 1006)</name>
    <name type="common">Penicillium stipitatum</name>
    <dbReference type="NCBI Taxonomy" id="441959"/>
    <lineage>
        <taxon>Eukaryota</taxon>
        <taxon>Fungi</taxon>
        <taxon>Dikarya</taxon>
        <taxon>Ascomycota</taxon>
        <taxon>Pezizomycotina</taxon>
        <taxon>Eurotiomycetes</taxon>
        <taxon>Eurotiomycetidae</taxon>
        <taxon>Eurotiales</taxon>
        <taxon>Trichocomaceae</taxon>
        <taxon>Talaromyces</taxon>
        <taxon>Talaromyces sect. Talaromyces</taxon>
    </lineage>
</organism>